<evidence type="ECO:0000255" key="1">
    <source>
        <dbReference type="HAMAP-Rule" id="MF_00446"/>
    </source>
</evidence>
<gene>
    <name evidence="1" type="primary">panD</name>
    <name type="ordered locus">Dtpsy_2817</name>
</gene>
<comment type="function">
    <text evidence="1">Catalyzes the pyruvoyl-dependent decarboxylation of aspartate to produce beta-alanine.</text>
</comment>
<comment type="catalytic activity">
    <reaction evidence="1">
        <text>L-aspartate + H(+) = beta-alanine + CO2</text>
        <dbReference type="Rhea" id="RHEA:19497"/>
        <dbReference type="ChEBI" id="CHEBI:15378"/>
        <dbReference type="ChEBI" id="CHEBI:16526"/>
        <dbReference type="ChEBI" id="CHEBI:29991"/>
        <dbReference type="ChEBI" id="CHEBI:57966"/>
        <dbReference type="EC" id="4.1.1.11"/>
    </reaction>
</comment>
<comment type="cofactor">
    <cofactor evidence="1">
        <name>pyruvate</name>
        <dbReference type="ChEBI" id="CHEBI:15361"/>
    </cofactor>
    <text evidence="1">Binds 1 pyruvoyl group covalently per subunit.</text>
</comment>
<comment type="pathway">
    <text evidence="1">Cofactor biosynthesis; (R)-pantothenate biosynthesis; beta-alanine from L-aspartate: step 1/1.</text>
</comment>
<comment type="subunit">
    <text evidence="1">Heterooctamer of four alpha and four beta subunits.</text>
</comment>
<comment type="subcellular location">
    <subcellularLocation>
        <location evidence="1">Cytoplasm</location>
    </subcellularLocation>
</comment>
<comment type="PTM">
    <text evidence="1">Is synthesized initially as an inactive proenzyme, which is activated by self-cleavage at a specific serine bond to produce a beta-subunit with a hydroxyl group at its C-terminus and an alpha-subunit with a pyruvoyl group at its N-terminus.</text>
</comment>
<comment type="similarity">
    <text evidence="1">Belongs to the PanD family.</text>
</comment>
<reference key="1">
    <citation type="submission" date="2009-01" db="EMBL/GenBank/DDBJ databases">
        <title>Complete sequence of Diaphorobacter sp. TPSY.</title>
        <authorList>
            <consortium name="US DOE Joint Genome Institute"/>
            <person name="Lucas S."/>
            <person name="Copeland A."/>
            <person name="Lapidus A."/>
            <person name="Glavina del Rio T."/>
            <person name="Tice H."/>
            <person name="Bruce D."/>
            <person name="Goodwin L."/>
            <person name="Pitluck S."/>
            <person name="Chertkov O."/>
            <person name="Brettin T."/>
            <person name="Detter J.C."/>
            <person name="Han C."/>
            <person name="Larimer F."/>
            <person name="Land M."/>
            <person name="Hauser L."/>
            <person name="Kyrpides N."/>
            <person name="Mikhailova N."/>
            <person name="Coates J.D."/>
        </authorList>
    </citation>
    <scope>NUCLEOTIDE SEQUENCE [LARGE SCALE GENOMIC DNA]</scope>
    <source>
        <strain>TPSY</strain>
    </source>
</reference>
<protein>
    <recommendedName>
        <fullName evidence="1">Aspartate 1-decarboxylase</fullName>
        <ecNumber evidence="1">4.1.1.11</ecNumber>
    </recommendedName>
    <alternativeName>
        <fullName evidence="1">Aspartate alpha-decarboxylase</fullName>
    </alternativeName>
    <component>
        <recommendedName>
            <fullName evidence="1">Aspartate 1-decarboxylase beta chain</fullName>
        </recommendedName>
    </component>
    <component>
        <recommendedName>
            <fullName evidence="1">Aspartate 1-decarboxylase alpha chain</fullName>
        </recommendedName>
    </component>
</protein>
<organism>
    <name type="scientific">Acidovorax ebreus (strain TPSY)</name>
    <name type="common">Diaphorobacter sp. (strain TPSY)</name>
    <dbReference type="NCBI Taxonomy" id="535289"/>
    <lineage>
        <taxon>Bacteria</taxon>
        <taxon>Pseudomonadati</taxon>
        <taxon>Pseudomonadota</taxon>
        <taxon>Betaproteobacteria</taxon>
        <taxon>Burkholderiales</taxon>
        <taxon>Comamonadaceae</taxon>
        <taxon>Diaphorobacter</taxon>
    </lineage>
</organism>
<accession>B9MEY1</accession>
<name>PAND_ACIET</name>
<proteinExistence type="inferred from homology"/>
<keyword id="KW-0068">Autocatalytic cleavage</keyword>
<keyword id="KW-0963">Cytoplasm</keyword>
<keyword id="KW-0210">Decarboxylase</keyword>
<keyword id="KW-0456">Lyase</keyword>
<keyword id="KW-0566">Pantothenate biosynthesis</keyword>
<keyword id="KW-0670">Pyruvate</keyword>
<keyword id="KW-1185">Reference proteome</keyword>
<keyword id="KW-0704">Schiff base</keyword>
<keyword id="KW-0865">Zymogen</keyword>
<feature type="chain" id="PRO_1000191984" description="Aspartate 1-decarboxylase beta chain" evidence="1">
    <location>
        <begin position="1"/>
        <end position="24"/>
    </location>
</feature>
<feature type="chain" id="PRO_1000191985" description="Aspartate 1-decarboxylase alpha chain" evidence="1">
    <location>
        <begin position="25"/>
        <end position="126"/>
    </location>
</feature>
<feature type="active site" description="Schiff-base intermediate with substrate; via pyruvic acid" evidence="1">
    <location>
        <position position="25"/>
    </location>
</feature>
<feature type="active site" description="Proton donor" evidence="1">
    <location>
        <position position="58"/>
    </location>
</feature>
<feature type="binding site" evidence="1">
    <location>
        <position position="57"/>
    </location>
    <ligand>
        <name>substrate</name>
    </ligand>
</feature>
<feature type="binding site" evidence="1">
    <location>
        <begin position="73"/>
        <end position="75"/>
    </location>
    <ligand>
        <name>substrate</name>
    </ligand>
</feature>
<feature type="modified residue" description="Pyruvic acid (Ser)" evidence="1">
    <location>
        <position position="25"/>
    </location>
</feature>
<dbReference type="EC" id="4.1.1.11" evidence="1"/>
<dbReference type="EMBL" id="CP001392">
    <property type="protein sequence ID" value="ACM34251.1"/>
    <property type="molecule type" value="Genomic_DNA"/>
</dbReference>
<dbReference type="RefSeq" id="WP_011806592.1">
    <property type="nucleotide sequence ID" value="NC_011992.1"/>
</dbReference>
<dbReference type="SMR" id="B9MEY1"/>
<dbReference type="GeneID" id="84684152"/>
<dbReference type="KEGG" id="dia:Dtpsy_2817"/>
<dbReference type="eggNOG" id="COG0853">
    <property type="taxonomic scope" value="Bacteria"/>
</dbReference>
<dbReference type="HOGENOM" id="CLU_115305_2_1_4"/>
<dbReference type="UniPathway" id="UPA00028">
    <property type="reaction ID" value="UER00002"/>
</dbReference>
<dbReference type="Proteomes" id="UP000000450">
    <property type="component" value="Chromosome"/>
</dbReference>
<dbReference type="GO" id="GO:0005829">
    <property type="term" value="C:cytosol"/>
    <property type="evidence" value="ECO:0007669"/>
    <property type="project" value="TreeGrafter"/>
</dbReference>
<dbReference type="GO" id="GO:0004068">
    <property type="term" value="F:aspartate 1-decarboxylase activity"/>
    <property type="evidence" value="ECO:0007669"/>
    <property type="project" value="UniProtKB-UniRule"/>
</dbReference>
<dbReference type="GO" id="GO:0006523">
    <property type="term" value="P:alanine biosynthetic process"/>
    <property type="evidence" value="ECO:0007669"/>
    <property type="project" value="InterPro"/>
</dbReference>
<dbReference type="GO" id="GO:0015940">
    <property type="term" value="P:pantothenate biosynthetic process"/>
    <property type="evidence" value="ECO:0007669"/>
    <property type="project" value="UniProtKB-UniRule"/>
</dbReference>
<dbReference type="CDD" id="cd06919">
    <property type="entry name" value="Asp_decarbox"/>
    <property type="match status" value="1"/>
</dbReference>
<dbReference type="Gene3D" id="2.40.40.20">
    <property type="match status" value="1"/>
</dbReference>
<dbReference type="HAMAP" id="MF_00446">
    <property type="entry name" value="PanD"/>
    <property type="match status" value="1"/>
</dbReference>
<dbReference type="InterPro" id="IPR009010">
    <property type="entry name" value="Asp_de-COase-like_dom_sf"/>
</dbReference>
<dbReference type="InterPro" id="IPR003190">
    <property type="entry name" value="Asp_decarbox"/>
</dbReference>
<dbReference type="NCBIfam" id="TIGR00223">
    <property type="entry name" value="panD"/>
    <property type="match status" value="1"/>
</dbReference>
<dbReference type="PANTHER" id="PTHR21012">
    <property type="entry name" value="ASPARTATE 1-DECARBOXYLASE"/>
    <property type="match status" value="1"/>
</dbReference>
<dbReference type="PANTHER" id="PTHR21012:SF0">
    <property type="entry name" value="ASPARTATE 1-DECARBOXYLASE"/>
    <property type="match status" value="1"/>
</dbReference>
<dbReference type="Pfam" id="PF02261">
    <property type="entry name" value="Asp_decarbox"/>
    <property type="match status" value="1"/>
</dbReference>
<dbReference type="PIRSF" id="PIRSF006246">
    <property type="entry name" value="Asp_decarbox"/>
    <property type="match status" value="1"/>
</dbReference>
<dbReference type="SUPFAM" id="SSF50692">
    <property type="entry name" value="ADC-like"/>
    <property type="match status" value="1"/>
</dbReference>
<sequence>MYRTLLKSKIHRVKTTHCELHYEGSCAIDEDLLEAANICENEQVHIWNVDNGERFVTYAIKGQRGSGMISVNGSAARRACVGDLLIIAAFAQVAEADVAAHQPQLVFVNDQNRQVELRHHVPTQAL</sequence>